<proteinExistence type="inferred from homology"/>
<gene>
    <name evidence="1" type="primary">serS</name>
    <name type="ordered locus">FTT_1330</name>
</gene>
<accession>Q5NFB0</accession>
<keyword id="KW-0030">Aminoacyl-tRNA synthetase</keyword>
<keyword id="KW-0067">ATP-binding</keyword>
<keyword id="KW-0963">Cytoplasm</keyword>
<keyword id="KW-0436">Ligase</keyword>
<keyword id="KW-0547">Nucleotide-binding</keyword>
<keyword id="KW-0648">Protein biosynthesis</keyword>
<keyword id="KW-1185">Reference proteome</keyword>
<sequence>MLDAKYIKDNLQQVAEKLATRGYQFDIAEFEAQEQKRKHLQERTQDLQSQRNTISKEIGQKKAKGEDTSDIFAKVNQINEELKIIEKELKDLQDTINQTLLSMPNLPADDVPVGKDENDNVEIRRWGTPREFHPEAPAKDHSDIGEILKMIDFKAAAKVTGSRFMVLKNKIAKLHRALSQFMLDLHTEKHGYEELYVPYLVNNDSLYGTGQLPKFAADLFKLEGDFEYSLIPTAEVPITNLVRDEILDTETLPRYYTAHTPCFRSEAGSYGRDTKGMIRQHQFEKVELVHITTADKGEESLELLTSHAEKVLQKLNLPYRVMKLCTGDMGFSAKKTYDLEVWLPSQNTYREISSCSWCGDFQARRMKARHKNPSMKKPELVHTLNGSGLAVGRTLLAIIENYQQEDGSIMVPDALIKYMGGISVIK</sequence>
<reference key="1">
    <citation type="journal article" date="2005" name="Nat. Genet.">
        <title>The complete genome sequence of Francisella tularensis, the causative agent of tularemia.</title>
        <authorList>
            <person name="Larsson P."/>
            <person name="Oyston P.C.F."/>
            <person name="Chain P."/>
            <person name="Chu M.C."/>
            <person name="Duffield M."/>
            <person name="Fuxelius H.-H."/>
            <person name="Garcia E."/>
            <person name="Haelltorp G."/>
            <person name="Johansson D."/>
            <person name="Isherwood K.E."/>
            <person name="Karp P.D."/>
            <person name="Larsson E."/>
            <person name="Liu Y."/>
            <person name="Michell S."/>
            <person name="Prior J."/>
            <person name="Prior R."/>
            <person name="Malfatti S."/>
            <person name="Sjoestedt A."/>
            <person name="Svensson K."/>
            <person name="Thompson N."/>
            <person name="Vergez L."/>
            <person name="Wagg J.K."/>
            <person name="Wren B.W."/>
            <person name="Lindler L.E."/>
            <person name="Andersson S.G.E."/>
            <person name="Forsman M."/>
            <person name="Titball R.W."/>
        </authorList>
    </citation>
    <scope>NUCLEOTIDE SEQUENCE [LARGE SCALE GENOMIC DNA]</scope>
    <source>
        <strain>SCHU S4 / Schu 4</strain>
    </source>
</reference>
<name>SYS_FRATT</name>
<organism>
    <name type="scientific">Francisella tularensis subsp. tularensis (strain SCHU S4 / Schu 4)</name>
    <dbReference type="NCBI Taxonomy" id="177416"/>
    <lineage>
        <taxon>Bacteria</taxon>
        <taxon>Pseudomonadati</taxon>
        <taxon>Pseudomonadota</taxon>
        <taxon>Gammaproteobacteria</taxon>
        <taxon>Thiotrichales</taxon>
        <taxon>Francisellaceae</taxon>
        <taxon>Francisella</taxon>
    </lineage>
</organism>
<protein>
    <recommendedName>
        <fullName evidence="1">Serine--tRNA ligase</fullName>
        <ecNumber evidence="1">6.1.1.11</ecNumber>
    </recommendedName>
    <alternativeName>
        <fullName evidence="1">Seryl-tRNA synthetase</fullName>
        <shortName evidence="1">SerRS</shortName>
    </alternativeName>
    <alternativeName>
        <fullName evidence="1">Seryl-tRNA(Ser/Sec) synthetase</fullName>
    </alternativeName>
</protein>
<dbReference type="EC" id="6.1.1.11" evidence="1"/>
<dbReference type="EMBL" id="AJ749949">
    <property type="protein sequence ID" value="CAG45963.1"/>
    <property type="molecule type" value="Genomic_DNA"/>
</dbReference>
<dbReference type="RefSeq" id="WP_003022075.1">
    <property type="nucleotide sequence ID" value="NZ_CP010290.1"/>
</dbReference>
<dbReference type="RefSeq" id="YP_170282.1">
    <property type="nucleotide sequence ID" value="NC_006570.2"/>
</dbReference>
<dbReference type="SMR" id="Q5NFB0"/>
<dbReference type="IntAct" id="Q5NFB0">
    <property type="interactions" value="7"/>
</dbReference>
<dbReference type="STRING" id="177416.FTT_1330"/>
<dbReference type="DNASU" id="3190714"/>
<dbReference type="EnsemblBacteria" id="CAG45963">
    <property type="protein sequence ID" value="CAG45963"/>
    <property type="gene ID" value="FTT_1330"/>
</dbReference>
<dbReference type="KEGG" id="ftu:FTT_1330"/>
<dbReference type="eggNOG" id="COG0172">
    <property type="taxonomic scope" value="Bacteria"/>
</dbReference>
<dbReference type="OrthoDB" id="9804647at2"/>
<dbReference type="UniPathway" id="UPA00906">
    <property type="reaction ID" value="UER00895"/>
</dbReference>
<dbReference type="Proteomes" id="UP000001174">
    <property type="component" value="Chromosome"/>
</dbReference>
<dbReference type="GO" id="GO:0005737">
    <property type="term" value="C:cytoplasm"/>
    <property type="evidence" value="ECO:0007669"/>
    <property type="project" value="UniProtKB-SubCell"/>
</dbReference>
<dbReference type="GO" id="GO:0005524">
    <property type="term" value="F:ATP binding"/>
    <property type="evidence" value="ECO:0007669"/>
    <property type="project" value="UniProtKB-UniRule"/>
</dbReference>
<dbReference type="GO" id="GO:0004828">
    <property type="term" value="F:serine-tRNA ligase activity"/>
    <property type="evidence" value="ECO:0007669"/>
    <property type="project" value="UniProtKB-UniRule"/>
</dbReference>
<dbReference type="GO" id="GO:0016260">
    <property type="term" value="P:selenocysteine biosynthetic process"/>
    <property type="evidence" value="ECO:0007669"/>
    <property type="project" value="UniProtKB-UniRule"/>
</dbReference>
<dbReference type="GO" id="GO:0006434">
    <property type="term" value="P:seryl-tRNA aminoacylation"/>
    <property type="evidence" value="ECO:0007669"/>
    <property type="project" value="UniProtKB-UniRule"/>
</dbReference>
<dbReference type="CDD" id="cd00770">
    <property type="entry name" value="SerRS_core"/>
    <property type="match status" value="1"/>
</dbReference>
<dbReference type="Gene3D" id="3.30.930.10">
    <property type="entry name" value="Bira Bifunctional Protein, Domain 2"/>
    <property type="match status" value="1"/>
</dbReference>
<dbReference type="Gene3D" id="1.10.287.40">
    <property type="entry name" value="Serine-tRNA synthetase, tRNA binding domain"/>
    <property type="match status" value="1"/>
</dbReference>
<dbReference type="HAMAP" id="MF_00176">
    <property type="entry name" value="Ser_tRNA_synth_type1"/>
    <property type="match status" value="1"/>
</dbReference>
<dbReference type="InterPro" id="IPR002314">
    <property type="entry name" value="aa-tRNA-synt_IIb"/>
</dbReference>
<dbReference type="InterPro" id="IPR006195">
    <property type="entry name" value="aa-tRNA-synth_II"/>
</dbReference>
<dbReference type="InterPro" id="IPR045864">
    <property type="entry name" value="aa-tRNA-synth_II/BPL/LPL"/>
</dbReference>
<dbReference type="InterPro" id="IPR002317">
    <property type="entry name" value="Ser-tRNA-ligase_type_1"/>
</dbReference>
<dbReference type="InterPro" id="IPR015866">
    <property type="entry name" value="Ser-tRNA-synth_1_N"/>
</dbReference>
<dbReference type="InterPro" id="IPR042103">
    <property type="entry name" value="SerRS_1_N_sf"/>
</dbReference>
<dbReference type="InterPro" id="IPR033729">
    <property type="entry name" value="SerRS_core"/>
</dbReference>
<dbReference type="InterPro" id="IPR010978">
    <property type="entry name" value="tRNA-bd_arm"/>
</dbReference>
<dbReference type="NCBIfam" id="TIGR00414">
    <property type="entry name" value="serS"/>
    <property type="match status" value="1"/>
</dbReference>
<dbReference type="PANTHER" id="PTHR43697:SF1">
    <property type="entry name" value="SERINE--TRNA LIGASE"/>
    <property type="match status" value="1"/>
</dbReference>
<dbReference type="PANTHER" id="PTHR43697">
    <property type="entry name" value="SERYL-TRNA SYNTHETASE"/>
    <property type="match status" value="1"/>
</dbReference>
<dbReference type="Pfam" id="PF02403">
    <property type="entry name" value="Seryl_tRNA_N"/>
    <property type="match status" value="1"/>
</dbReference>
<dbReference type="Pfam" id="PF00587">
    <property type="entry name" value="tRNA-synt_2b"/>
    <property type="match status" value="1"/>
</dbReference>
<dbReference type="PIRSF" id="PIRSF001529">
    <property type="entry name" value="Ser-tRNA-synth_IIa"/>
    <property type="match status" value="1"/>
</dbReference>
<dbReference type="PRINTS" id="PR00981">
    <property type="entry name" value="TRNASYNTHSER"/>
</dbReference>
<dbReference type="SUPFAM" id="SSF55681">
    <property type="entry name" value="Class II aaRS and biotin synthetases"/>
    <property type="match status" value="1"/>
</dbReference>
<dbReference type="SUPFAM" id="SSF46589">
    <property type="entry name" value="tRNA-binding arm"/>
    <property type="match status" value="1"/>
</dbReference>
<dbReference type="PROSITE" id="PS50862">
    <property type="entry name" value="AA_TRNA_LIGASE_II"/>
    <property type="match status" value="1"/>
</dbReference>
<comment type="function">
    <text evidence="1">Catalyzes the attachment of serine to tRNA(Ser). Is also able to aminoacylate tRNA(Sec) with serine, to form the misacylated tRNA L-seryl-tRNA(Sec), which will be further converted into selenocysteinyl-tRNA(Sec).</text>
</comment>
<comment type="catalytic activity">
    <reaction evidence="1">
        <text>tRNA(Ser) + L-serine + ATP = L-seryl-tRNA(Ser) + AMP + diphosphate + H(+)</text>
        <dbReference type="Rhea" id="RHEA:12292"/>
        <dbReference type="Rhea" id="RHEA-COMP:9669"/>
        <dbReference type="Rhea" id="RHEA-COMP:9703"/>
        <dbReference type="ChEBI" id="CHEBI:15378"/>
        <dbReference type="ChEBI" id="CHEBI:30616"/>
        <dbReference type="ChEBI" id="CHEBI:33019"/>
        <dbReference type="ChEBI" id="CHEBI:33384"/>
        <dbReference type="ChEBI" id="CHEBI:78442"/>
        <dbReference type="ChEBI" id="CHEBI:78533"/>
        <dbReference type="ChEBI" id="CHEBI:456215"/>
        <dbReference type="EC" id="6.1.1.11"/>
    </reaction>
</comment>
<comment type="catalytic activity">
    <reaction evidence="1">
        <text>tRNA(Sec) + L-serine + ATP = L-seryl-tRNA(Sec) + AMP + diphosphate + H(+)</text>
        <dbReference type="Rhea" id="RHEA:42580"/>
        <dbReference type="Rhea" id="RHEA-COMP:9742"/>
        <dbReference type="Rhea" id="RHEA-COMP:10128"/>
        <dbReference type="ChEBI" id="CHEBI:15378"/>
        <dbReference type="ChEBI" id="CHEBI:30616"/>
        <dbReference type="ChEBI" id="CHEBI:33019"/>
        <dbReference type="ChEBI" id="CHEBI:33384"/>
        <dbReference type="ChEBI" id="CHEBI:78442"/>
        <dbReference type="ChEBI" id="CHEBI:78533"/>
        <dbReference type="ChEBI" id="CHEBI:456215"/>
        <dbReference type="EC" id="6.1.1.11"/>
    </reaction>
</comment>
<comment type="pathway">
    <text evidence="1">Aminoacyl-tRNA biosynthesis; selenocysteinyl-tRNA(Sec) biosynthesis; L-seryl-tRNA(Sec) from L-serine and tRNA(Sec): step 1/1.</text>
</comment>
<comment type="subunit">
    <text evidence="1">Homodimer. The tRNA molecule binds across the dimer.</text>
</comment>
<comment type="subcellular location">
    <subcellularLocation>
        <location evidence="1">Cytoplasm</location>
    </subcellularLocation>
</comment>
<comment type="domain">
    <text evidence="1">Consists of two distinct domains, a catalytic core and a N-terminal extension that is involved in tRNA binding.</text>
</comment>
<comment type="similarity">
    <text evidence="1">Belongs to the class-II aminoacyl-tRNA synthetase family. Type-1 seryl-tRNA synthetase subfamily.</text>
</comment>
<evidence type="ECO:0000255" key="1">
    <source>
        <dbReference type="HAMAP-Rule" id="MF_00176"/>
    </source>
</evidence>
<evidence type="ECO:0000256" key="2">
    <source>
        <dbReference type="SAM" id="MobiDB-lite"/>
    </source>
</evidence>
<feature type="chain" id="PRO_0000122050" description="Serine--tRNA ligase">
    <location>
        <begin position="1"/>
        <end position="426"/>
    </location>
</feature>
<feature type="region of interest" description="Disordered" evidence="2">
    <location>
        <begin position="36"/>
        <end position="66"/>
    </location>
</feature>
<feature type="compositionally biased region" description="Polar residues" evidence="2">
    <location>
        <begin position="46"/>
        <end position="55"/>
    </location>
</feature>
<feature type="binding site" evidence="1">
    <location>
        <begin position="233"/>
        <end position="235"/>
    </location>
    <ligand>
        <name>L-serine</name>
        <dbReference type="ChEBI" id="CHEBI:33384"/>
    </ligand>
</feature>
<feature type="binding site" evidence="1">
    <location>
        <begin position="264"/>
        <end position="266"/>
    </location>
    <ligand>
        <name>ATP</name>
        <dbReference type="ChEBI" id="CHEBI:30616"/>
    </ligand>
</feature>
<feature type="binding site" evidence="1">
    <location>
        <position position="287"/>
    </location>
    <ligand>
        <name>L-serine</name>
        <dbReference type="ChEBI" id="CHEBI:33384"/>
    </ligand>
</feature>
<feature type="binding site" evidence="1">
    <location>
        <begin position="351"/>
        <end position="354"/>
    </location>
    <ligand>
        <name>ATP</name>
        <dbReference type="ChEBI" id="CHEBI:30616"/>
    </ligand>
</feature>
<feature type="binding site" evidence="1">
    <location>
        <position position="387"/>
    </location>
    <ligand>
        <name>L-serine</name>
        <dbReference type="ChEBI" id="CHEBI:33384"/>
    </ligand>
</feature>